<organism>
    <name type="scientific">Chlamydomonas reinhardtii</name>
    <name type="common">Chlamydomonas smithii</name>
    <dbReference type="NCBI Taxonomy" id="3055"/>
    <lineage>
        <taxon>Eukaryota</taxon>
        <taxon>Viridiplantae</taxon>
        <taxon>Chlorophyta</taxon>
        <taxon>core chlorophytes</taxon>
        <taxon>Chlorophyceae</taxon>
        <taxon>CS clade</taxon>
        <taxon>Chlamydomonadales</taxon>
        <taxon>Chlamydomonadaceae</taxon>
        <taxon>Chlamydomonas</taxon>
    </lineage>
</organism>
<geneLocation type="chloroplast"/>
<dbReference type="EC" id="7.1.2.2" evidence="1 2"/>
<dbReference type="EMBL" id="M13704">
    <property type="protein sequence ID" value="AAA84146.1"/>
    <property type="status" value="ALT_INIT"/>
    <property type="molecule type" value="Genomic_DNA"/>
</dbReference>
<dbReference type="EMBL" id="FJ423446">
    <property type="protein sequence ID" value="ACJ50145.1"/>
    <property type="status" value="ALT_INIT"/>
    <property type="molecule type" value="Genomic_DNA"/>
</dbReference>
<dbReference type="EMBL" id="FJ436946">
    <property type="protein sequence ID" value="ACK37278.1"/>
    <property type="status" value="ALT_INIT"/>
    <property type="molecule type" value="Genomic_DNA"/>
</dbReference>
<dbReference type="EMBL" id="FJ436947">
    <property type="protein sequence ID" value="ACK37279.1"/>
    <property type="status" value="ALT_INIT"/>
    <property type="molecule type" value="Genomic_DNA"/>
</dbReference>
<dbReference type="EMBL" id="BK000554">
    <property type="protein sequence ID" value="DAA00958.1"/>
    <property type="status" value="ALT_INIT"/>
    <property type="molecule type" value="Genomic_DNA"/>
</dbReference>
<dbReference type="PIR" id="C24829">
    <property type="entry name" value="C24829"/>
</dbReference>
<dbReference type="RefSeq" id="NP_958414.1">
    <property type="nucleotide sequence ID" value="NC_005353.1"/>
</dbReference>
<dbReference type="SMR" id="P06541"/>
<dbReference type="FunCoup" id="P06541">
    <property type="interactions" value="249"/>
</dbReference>
<dbReference type="STRING" id="3055.P06541"/>
<dbReference type="PaxDb" id="3055-DAA00958"/>
<dbReference type="GeneID" id="2717034"/>
<dbReference type="KEGG" id="cre:ChreCp058"/>
<dbReference type="eggNOG" id="KOG1350">
    <property type="taxonomic scope" value="Eukaryota"/>
</dbReference>
<dbReference type="HOGENOM" id="CLU_022398_0_2_1"/>
<dbReference type="InParanoid" id="P06541"/>
<dbReference type="BioCyc" id="CHLAMY:CHRECP058-MONOMER"/>
<dbReference type="Proteomes" id="UP000006906">
    <property type="component" value="Chloroplast"/>
</dbReference>
<dbReference type="GO" id="GO:0009535">
    <property type="term" value="C:chloroplast thylakoid membrane"/>
    <property type="evidence" value="ECO:0007669"/>
    <property type="project" value="UniProtKB-SubCell"/>
</dbReference>
<dbReference type="GO" id="GO:0005739">
    <property type="term" value="C:mitochondrion"/>
    <property type="evidence" value="ECO:0007669"/>
    <property type="project" value="GOC"/>
</dbReference>
<dbReference type="GO" id="GO:0045259">
    <property type="term" value="C:proton-transporting ATP synthase complex"/>
    <property type="evidence" value="ECO:0007669"/>
    <property type="project" value="UniProtKB-KW"/>
</dbReference>
<dbReference type="GO" id="GO:0005524">
    <property type="term" value="F:ATP binding"/>
    <property type="evidence" value="ECO:0007669"/>
    <property type="project" value="UniProtKB-UniRule"/>
</dbReference>
<dbReference type="GO" id="GO:0016887">
    <property type="term" value="F:ATP hydrolysis activity"/>
    <property type="evidence" value="ECO:0007669"/>
    <property type="project" value="InterPro"/>
</dbReference>
<dbReference type="GO" id="GO:0046933">
    <property type="term" value="F:proton-transporting ATP synthase activity, rotational mechanism"/>
    <property type="evidence" value="ECO:0007669"/>
    <property type="project" value="UniProtKB-UniRule"/>
</dbReference>
<dbReference type="GO" id="GO:0042776">
    <property type="term" value="P:proton motive force-driven mitochondrial ATP synthesis"/>
    <property type="evidence" value="ECO:0000318"/>
    <property type="project" value="GO_Central"/>
</dbReference>
<dbReference type="CDD" id="cd18110">
    <property type="entry name" value="ATP-synt_F1_beta_C"/>
    <property type="match status" value="1"/>
</dbReference>
<dbReference type="CDD" id="cd18115">
    <property type="entry name" value="ATP-synt_F1_beta_N"/>
    <property type="match status" value="1"/>
</dbReference>
<dbReference type="CDD" id="cd01133">
    <property type="entry name" value="F1-ATPase_beta_CD"/>
    <property type="match status" value="1"/>
</dbReference>
<dbReference type="FunFam" id="1.10.1140.10:FF:000001">
    <property type="entry name" value="ATP synthase subunit beta"/>
    <property type="match status" value="1"/>
</dbReference>
<dbReference type="FunFam" id="3.40.50.300:FF:000004">
    <property type="entry name" value="ATP synthase subunit beta"/>
    <property type="match status" value="1"/>
</dbReference>
<dbReference type="FunFam" id="2.40.10.170:FF:000002">
    <property type="entry name" value="ATP synthase subunit beta, chloroplastic"/>
    <property type="match status" value="1"/>
</dbReference>
<dbReference type="Gene3D" id="2.40.10.170">
    <property type="match status" value="1"/>
</dbReference>
<dbReference type="Gene3D" id="1.10.1140.10">
    <property type="entry name" value="Bovine Mitochondrial F1-atpase, Atp Synthase Beta Chain, Chain D, domain 3"/>
    <property type="match status" value="1"/>
</dbReference>
<dbReference type="Gene3D" id="3.40.50.300">
    <property type="entry name" value="P-loop containing nucleotide triphosphate hydrolases"/>
    <property type="match status" value="1"/>
</dbReference>
<dbReference type="HAMAP" id="MF_01347">
    <property type="entry name" value="ATP_synth_beta_bact"/>
    <property type="match status" value="1"/>
</dbReference>
<dbReference type="InterPro" id="IPR003593">
    <property type="entry name" value="AAA+_ATPase"/>
</dbReference>
<dbReference type="InterPro" id="IPR055190">
    <property type="entry name" value="ATP-synt_VA_C"/>
</dbReference>
<dbReference type="InterPro" id="IPR005722">
    <property type="entry name" value="ATP_synth_F1_bsu"/>
</dbReference>
<dbReference type="InterPro" id="IPR020003">
    <property type="entry name" value="ATPase_a/bsu_AS"/>
</dbReference>
<dbReference type="InterPro" id="IPR050053">
    <property type="entry name" value="ATPase_alpha/beta_chains"/>
</dbReference>
<dbReference type="InterPro" id="IPR004100">
    <property type="entry name" value="ATPase_F1/V1/A1_a/bsu_N"/>
</dbReference>
<dbReference type="InterPro" id="IPR036121">
    <property type="entry name" value="ATPase_F1/V1/A1_a/bsu_N_sf"/>
</dbReference>
<dbReference type="InterPro" id="IPR000194">
    <property type="entry name" value="ATPase_F1/V1/A1_a/bsu_nucl-bd"/>
</dbReference>
<dbReference type="InterPro" id="IPR024034">
    <property type="entry name" value="ATPase_F1/V1_b/a_C"/>
</dbReference>
<dbReference type="InterPro" id="IPR027417">
    <property type="entry name" value="P-loop_NTPase"/>
</dbReference>
<dbReference type="NCBIfam" id="TIGR01039">
    <property type="entry name" value="atpD"/>
    <property type="match status" value="1"/>
</dbReference>
<dbReference type="PANTHER" id="PTHR15184">
    <property type="entry name" value="ATP SYNTHASE"/>
    <property type="match status" value="1"/>
</dbReference>
<dbReference type="PANTHER" id="PTHR15184:SF71">
    <property type="entry name" value="ATP SYNTHASE SUBUNIT BETA, MITOCHONDRIAL"/>
    <property type="match status" value="1"/>
</dbReference>
<dbReference type="Pfam" id="PF00006">
    <property type="entry name" value="ATP-synt_ab"/>
    <property type="match status" value="1"/>
</dbReference>
<dbReference type="Pfam" id="PF02874">
    <property type="entry name" value="ATP-synt_ab_N"/>
    <property type="match status" value="1"/>
</dbReference>
<dbReference type="Pfam" id="PF22919">
    <property type="entry name" value="ATP-synt_VA_C"/>
    <property type="match status" value="1"/>
</dbReference>
<dbReference type="SMART" id="SM00382">
    <property type="entry name" value="AAA"/>
    <property type="match status" value="1"/>
</dbReference>
<dbReference type="SUPFAM" id="SSF47917">
    <property type="entry name" value="C-terminal domain of alpha and beta subunits of F1 ATP synthase"/>
    <property type="match status" value="1"/>
</dbReference>
<dbReference type="SUPFAM" id="SSF50615">
    <property type="entry name" value="N-terminal domain of alpha and beta subunits of F1 ATP synthase"/>
    <property type="match status" value="1"/>
</dbReference>
<dbReference type="SUPFAM" id="SSF52540">
    <property type="entry name" value="P-loop containing nucleoside triphosphate hydrolases"/>
    <property type="match status" value="1"/>
</dbReference>
<dbReference type="PROSITE" id="PS00152">
    <property type="entry name" value="ATPASE_ALPHA_BETA"/>
    <property type="match status" value="1"/>
</dbReference>
<protein>
    <recommendedName>
        <fullName evidence="1 4">ATP synthase subunit beta, chloroplastic</fullName>
        <ecNumber evidence="1 2">7.1.2.2</ecNumber>
    </recommendedName>
    <alternativeName>
        <fullName evidence="1">ATP synthase F1 sector subunit beta</fullName>
    </alternativeName>
    <alternativeName>
        <fullName evidence="1">F-ATPase subunit beta</fullName>
    </alternativeName>
</protein>
<feature type="initiator methionine" description="Removed" evidence="2">
    <location>
        <position position="1"/>
    </location>
</feature>
<feature type="chain" id="PRO_0000144505" description="ATP synthase subunit beta, chloroplastic">
    <location>
        <begin position="2"/>
        <end position="481"/>
    </location>
</feature>
<feature type="binding site" evidence="1">
    <location>
        <begin position="162"/>
        <end position="169"/>
    </location>
    <ligand>
        <name>ATP</name>
        <dbReference type="ChEBI" id="CHEBI:30616"/>
    </ligand>
</feature>
<sequence>MSDSIETKNMGRIVQIIGPVLDIVFAKGQVPNIYNALTIRAKNSAGTEMAVTCEVQQLLGDNCVRAVSMNPTEGLMRGMEVVDTGKPLSVPVGKVTLGRIFNVLGEPVDNMGNVKVEETLPIHRTAPAFVDLDTRLSIFETGIKVVDLLAPYRRGGKIGLFGGAGVGKTVLIMELINNIAKAHGGVSVFAGVGERTREGNDLYTEMKESGVIVEKNLSDSKVALVYGQMNEPPGARMRVALTALTMAEYFRDVNKQDVLFFIDNIFRFVQAGAEVSALLGRMPSAVGYQPTLATEMGGLQERITSTKDGSITSIQAVYVPADDLTDPAPATTFAHLDATTVLSRNLAAKGIYPAVDPLESTSTMLQPWILGEKHYDSAQSVKKTLQRYKELQDIIAILGLDELSEEDRLIVARARKIERFLSQPFFVAEVFTGSPGKYVSLAETIEGFGKIFAGELDDLPEQAFYLVGNITEAISKAASLK</sequence>
<keyword id="KW-0066">ATP synthesis</keyword>
<keyword id="KW-0067">ATP-binding</keyword>
<keyword id="KW-0139">CF(1)</keyword>
<keyword id="KW-0150">Chloroplast</keyword>
<keyword id="KW-0903">Direct protein sequencing</keyword>
<keyword id="KW-0375">Hydrogen ion transport</keyword>
<keyword id="KW-0406">Ion transport</keyword>
<keyword id="KW-0472">Membrane</keyword>
<keyword id="KW-0547">Nucleotide-binding</keyword>
<keyword id="KW-0934">Plastid</keyword>
<keyword id="KW-1185">Reference proteome</keyword>
<keyword id="KW-0793">Thylakoid</keyword>
<keyword id="KW-1278">Translocase</keyword>
<keyword id="KW-0813">Transport</keyword>
<proteinExistence type="evidence at protein level"/>
<evidence type="ECO:0000255" key="1">
    <source>
        <dbReference type="HAMAP-Rule" id="MF_01347"/>
    </source>
</evidence>
<evidence type="ECO:0000269" key="2">
    <source>
    </source>
</evidence>
<evidence type="ECO:0000303" key="3">
    <source>
    </source>
</evidence>
<evidence type="ECO:0000303" key="4">
    <source>
    </source>
</evidence>
<evidence type="ECO:0000305" key="5"/>
<reference key="1">
    <citation type="journal article" date="1986" name="Gene">
        <title>The sequence of the chloroplast atpB gene and its flanking regions in Chlamydomonas reinhardtii.</title>
        <authorList>
            <person name="Woessner J.P."/>
            <person name="Gillham N.W."/>
            <person name="Boynton J.E."/>
        </authorList>
    </citation>
    <scope>NUCLEOTIDE SEQUENCE [GENOMIC DNA]</scope>
</reference>
<reference key="2">
    <citation type="journal article" date="2009" name="BMC Evol. Biol.">
        <title>Nucleotide diversity of the Chlamydomonas reinhardtii plastid genome: addressing the mutational-hazard hypothesis.</title>
        <authorList>
            <person name="Smith D.R."/>
            <person name="Lee R.W."/>
        </authorList>
    </citation>
    <scope>NUCLEOTIDE SEQUENCE [LARGE SCALE GENOMIC DNA]</scope>
    <source>
        <strain>CC-503</strain>
    </source>
</reference>
<reference key="3">
    <citation type="journal article" date="1995" name="FEBS Lett.">
        <title>Isolation of CF0CF1 from Chlamydomonas reinhardtii cw15 and the N-terminal amino acid sequences of the CF0CF1 subunits.</title>
        <authorList>
            <person name="Fiedler H.R."/>
            <person name="Schmid R."/>
            <person name="Leu S."/>
            <person name="Shavit N."/>
            <person name="Strotmann H."/>
        </authorList>
    </citation>
    <scope>PROTEIN SEQUENCE OF 2-20</scope>
    <scope>FUNCTION</scope>
    <scope>CATALYTIC ACTIVITY</scope>
    <scope>SUBUNIT</scope>
    <scope>SUBCELLULAR LOCATION</scope>
    <source>
        <strain>cw15</strain>
    </source>
</reference>
<reference key="4">
    <citation type="journal article" date="2002" name="Plant Cell">
        <title>The Chlamydomonas reinhardtii plastid chromosome: islands of genes in a sea of repeats.</title>
        <authorList>
            <person name="Maul J.E."/>
            <person name="Lilly J.W."/>
            <person name="Cui L."/>
            <person name="dePamphilis C.W."/>
            <person name="Miller W."/>
            <person name="Harris E.H."/>
            <person name="Stern D.B."/>
        </authorList>
    </citation>
    <scope>IDENTIFICATION</scope>
    <scope>COMPLETE PLASTID GENOME</scope>
</reference>
<comment type="function">
    <text evidence="2">F(1)F(0) ATP synthase produces ATP from ADP in the presence of a proton or sodium gradient. F-type ATPases consist of two structural domains, F(1) containing the extramembraneous catalytic core and F(0) containing the membrane proton channel, linked together by a central stalk and a peripheral stalk. During catalysis, ATP synthesis in the catalytic domain of F(1) is coupled via a rotary mechanism of the central stalk subunits to proton translocation.</text>
</comment>
<comment type="function">
    <text evidence="1">Produces ATP from ADP in the presence of a proton gradient across the membrane. The catalytic sites are hosted primarily by the beta subunits.</text>
</comment>
<comment type="catalytic activity">
    <reaction evidence="1 2">
        <text>ATP + H2O + 4 H(+)(in) = ADP + phosphate + 5 H(+)(out)</text>
        <dbReference type="Rhea" id="RHEA:57720"/>
        <dbReference type="ChEBI" id="CHEBI:15377"/>
        <dbReference type="ChEBI" id="CHEBI:15378"/>
        <dbReference type="ChEBI" id="CHEBI:30616"/>
        <dbReference type="ChEBI" id="CHEBI:43474"/>
        <dbReference type="ChEBI" id="CHEBI:456216"/>
        <dbReference type="EC" id="7.1.2.2"/>
    </reaction>
</comment>
<comment type="subunit">
    <text evidence="2">F-type ATPases have 2 components, F(1) - the catalytic core - and F(0) - the membrane proton channel. F(1) has five subunits: alpha(3), beta(3), gamma(1), delta(1), epsilon(1). F(0) has four main subunits: a(1), b(1), b'(1) and c(10-14). The alpha and beta chains form an alternating ring which encloses part of the gamma chain. F(1) is attached to F(0) by a central stalk formed by the gamma and epsilon chains, while a peripheral stalk is formed by the delta, b and b' chains.</text>
</comment>
<comment type="subcellular location">
    <subcellularLocation>
        <location evidence="1 2">Plastid</location>
        <location evidence="1 2">Chloroplast thylakoid membrane</location>
        <topology evidence="1">Peripheral membrane protein</topology>
    </subcellularLocation>
</comment>
<comment type="miscellaneous">
    <text evidence="5">In plastids the F-type ATPase is also known as CF(1)CF(0).</text>
</comment>
<comment type="similarity">
    <text evidence="1">Belongs to the ATPase alpha/beta chains family.</text>
</comment>
<comment type="sequence caution" evidence="5">
    <conflict type="erroneous initiation">
        <sequence resource="EMBL-CDS" id="AAA84146"/>
    </conflict>
    <text>Truncated N-terminus.</text>
</comment>
<comment type="sequence caution" evidence="5">
    <conflict type="erroneous initiation">
        <sequence resource="EMBL-CDS" id="ACJ50145"/>
    </conflict>
    <text>Truncated N-terminus.</text>
</comment>
<comment type="sequence caution" evidence="5">
    <conflict type="erroneous initiation">
        <sequence resource="EMBL-CDS" id="ACK37278"/>
    </conflict>
    <text>Truncated N-terminus.</text>
</comment>
<comment type="sequence caution" evidence="5">
    <conflict type="erroneous initiation">
        <sequence resource="EMBL-CDS" id="ACK37279"/>
    </conflict>
    <text>Truncated N-terminus.</text>
</comment>
<comment type="sequence caution" evidence="5">
    <conflict type="erroneous initiation">
        <sequence resource="EMBL-CDS" id="DAA00958"/>
    </conflict>
    <text>Truncated N-terminus.</text>
</comment>
<name>ATPB_CHLRE</name>
<accession>P06541</accession>
<accession>B7U1J8</accession>
<accession>Q9T2G7</accession>
<gene>
    <name evidence="1 3" type="primary">atpB</name>
</gene>